<comment type="function">
    <text evidence="1">Important for maintaining cell shape and cell wall integrity by localizing peptidoglycan synthesis to the cell poles.</text>
</comment>
<comment type="subunit">
    <text evidence="1">Forms homooligomers.</text>
</comment>
<comment type="subcellular location">
    <subcellularLocation>
        <location evidence="1">Cytoplasm</location>
    </subcellularLocation>
    <text evidence="1">Localizes to the cell poles.</text>
</comment>
<comment type="PTM">
    <text evidence="1">Phosphorylated by PknA.</text>
</comment>
<comment type="similarity">
    <text evidence="4">Belongs to the DivIVA family.</text>
</comment>
<name>WAG31_MYCLE</name>
<protein>
    <recommendedName>
        <fullName>Cell wall synthesis protein Wag31</fullName>
    </recommendedName>
    <alternativeName>
        <fullName>Antigen 84</fullName>
    </alternativeName>
</protein>
<sequence>MPLTPADVHNVAFSKPPIGKRGYNEDEVDAFLDLVENELTQLIEENSDLRQRIEELDHELAAGGGTGAGPVIAVQPTQALSTFEPELVSAKQAPVAAVAETAEELAMKATRVLSLAQDTADQLTSTAKVESDKMLADARVNADQILGEARLTAEATVAEAQQRADAMLADAQTRSEVQSRQAQEKADALQAEAERKHSEIMGAISQQRTVLEGRLEQLRTFEREYRTRLKTYLESQLEELGQRGSAAPVDSNADAGGFDQFNRGNN</sequence>
<gene>
    <name type="primary">wag31</name>
    <name type="synonym">ag84</name>
    <name type="ordered locus">ML0922</name>
</gene>
<reference key="1">
    <citation type="journal article" date="1995" name="Infect. Immun.">
        <title>Molecular and immunological characterization of the highly conserved antigen 84 from Mycobacterium tuberculosis and Mycobacterium leprae.</title>
        <authorList>
            <person name="Hermans P.W.M."/>
            <person name="Abebe F."/>
            <person name="Kuteyi V.I.O."/>
            <person name="Kolk A.H.J."/>
            <person name="Thole J.E.R."/>
            <person name="Harboe M."/>
        </authorList>
    </citation>
    <scope>NUCLEOTIDE SEQUENCE [GENOMIC DNA]</scope>
</reference>
<reference key="2">
    <citation type="journal article" date="2001" name="Nature">
        <title>Massive gene decay in the leprosy bacillus.</title>
        <authorList>
            <person name="Cole S.T."/>
            <person name="Eiglmeier K."/>
            <person name="Parkhill J."/>
            <person name="James K.D."/>
            <person name="Thomson N.R."/>
            <person name="Wheeler P.R."/>
            <person name="Honore N."/>
            <person name="Garnier T."/>
            <person name="Churcher C.M."/>
            <person name="Harris D.E."/>
            <person name="Mungall K.L."/>
            <person name="Basham D."/>
            <person name="Brown D."/>
            <person name="Chillingworth T."/>
            <person name="Connor R."/>
            <person name="Davies R.M."/>
            <person name="Devlin K."/>
            <person name="Duthoy S."/>
            <person name="Feltwell T."/>
            <person name="Fraser A."/>
            <person name="Hamlin N."/>
            <person name="Holroyd S."/>
            <person name="Hornsby T."/>
            <person name="Jagels K."/>
            <person name="Lacroix C."/>
            <person name="Maclean J."/>
            <person name="Moule S."/>
            <person name="Murphy L.D."/>
            <person name="Oliver K."/>
            <person name="Quail M.A."/>
            <person name="Rajandream M.A."/>
            <person name="Rutherford K.M."/>
            <person name="Rutter S."/>
            <person name="Seeger K."/>
            <person name="Simon S."/>
            <person name="Simmonds M."/>
            <person name="Skelton J."/>
            <person name="Squares R."/>
            <person name="Squares S."/>
            <person name="Stevens K."/>
            <person name="Taylor K."/>
            <person name="Whitehead S."/>
            <person name="Woodward J.R."/>
            <person name="Barrell B.G."/>
        </authorList>
    </citation>
    <scope>NUCLEOTIDE SEQUENCE [LARGE SCALE GENOMIC DNA]</scope>
    <source>
        <strain>TN</strain>
    </source>
</reference>
<proteinExistence type="inferred from homology"/>
<dbReference type="EMBL" id="X77128">
    <property type="protein sequence ID" value="CAA54384.1"/>
    <property type="molecule type" value="Genomic_DNA"/>
</dbReference>
<dbReference type="EMBL" id="AL583920">
    <property type="protein sequence ID" value="CAC31303.1"/>
    <property type="molecule type" value="Genomic_DNA"/>
</dbReference>
<dbReference type="PIR" id="S41931">
    <property type="entry name" value="S41931"/>
</dbReference>
<dbReference type="RefSeq" id="NP_301705.1">
    <property type="nucleotide sequence ID" value="NC_002677.1"/>
</dbReference>
<dbReference type="RefSeq" id="WP_010908029.1">
    <property type="nucleotide sequence ID" value="NC_002677.1"/>
</dbReference>
<dbReference type="SMR" id="P46815"/>
<dbReference type="STRING" id="272631.gene:17574748"/>
<dbReference type="KEGG" id="mle:ML0922"/>
<dbReference type="PATRIC" id="fig|272631.5.peg.1665"/>
<dbReference type="Leproma" id="ML0922"/>
<dbReference type="eggNOG" id="COG3599">
    <property type="taxonomic scope" value="Bacteria"/>
</dbReference>
<dbReference type="HOGENOM" id="CLU_062236_0_0_11"/>
<dbReference type="OrthoDB" id="9815492at2"/>
<dbReference type="Proteomes" id="UP000000806">
    <property type="component" value="Chromosome"/>
</dbReference>
<dbReference type="GO" id="GO:0005737">
    <property type="term" value="C:cytoplasm"/>
    <property type="evidence" value="ECO:0007669"/>
    <property type="project" value="UniProtKB-SubCell"/>
</dbReference>
<dbReference type="GO" id="GO:0051301">
    <property type="term" value="P:cell division"/>
    <property type="evidence" value="ECO:0007669"/>
    <property type="project" value="UniProtKB-KW"/>
</dbReference>
<dbReference type="GO" id="GO:0008360">
    <property type="term" value="P:regulation of cell shape"/>
    <property type="evidence" value="ECO:0007669"/>
    <property type="project" value="UniProtKB-KW"/>
</dbReference>
<dbReference type="Gene3D" id="6.10.250.660">
    <property type="match status" value="1"/>
</dbReference>
<dbReference type="Gene3D" id="1.20.5.620">
    <property type="entry name" value="F1F0 ATP synthase subunit B, membrane domain"/>
    <property type="match status" value="1"/>
</dbReference>
<dbReference type="InterPro" id="IPR019933">
    <property type="entry name" value="DivIVA_domain"/>
</dbReference>
<dbReference type="InterPro" id="IPR007793">
    <property type="entry name" value="DivIVA_fam"/>
</dbReference>
<dbReference type="NCBIfam" id="TIGR03544">
    <property type="entry name" value="DivI1A_domain"/>
    <property type="match status" value="1"/>
</dbReference>
<dbReference type="PANTHER" id="PTHR35794">
    <property type="entry name" value="CELL DIVISION PROTEIN DIVIVA"/>
    <property type="match status" value="1"/>
</dbReference>
<dbReference type="PANTHER" id="PTHR35794:SF2">
    <property type="entry name" value="CELL DIVISION PROTEIN DIVIVA"/>
    <property type="match status" value="1"/>
</dbReference>
<dbReference type="Pfam" id="PF05103">
    <property type="entry name" value="DivIVA"/>
    <property type="match status" value="1"/>
</dbReference>
<dbReference type="SUPFAM" id="SSF58113">
    <property type="entry name" value="Apolipoprotein A-I"/>
    <property type="match status" value="1"/>
</dbReference>
<feature type="chain" id="PRO_0000064491" description="Cell wall synthesis protein Wag31">
    <location>
        <begin position="1"/>
        <end position="266"/>
    </location>
</feature>
<feature type="region of interest" description="Disordered" evidence="3">
    <location>
        <begin position="239"/>
        <end position="266"/>
    </location>
</feature>
<feature type="coiled-coil region" evidence="2">
    <location>
        <begin position="31"/>
        <end position="64"/>
    </location>
</feature>
<feature type="coiled-coil region" evidence="2">
    <location>
        <begin position="152"/>
        <end position="203"/>
    </location>
</feature>
<feature type="modified residue" description="Phosphothreonine" evidence="1">
    <location>
        <position position="77"/>
    </location>
</feature>
<keyword id="KW-0131">Cell cycle</keyword>
<keyword id="KW-0132">Cell division</keyword>
<keyword id="KW-0133">Cell shape</keyword>
<keyword id="KW-0175">Coiled coil</keyword>
<keyword id="KW-0963">Cytoplasm</keyword>
<keyword id="KW-0597">Phosphoprotein</keyword>
<keyword id="KW-1185">Reference proteome</keyword>
<organism>
    <name type="scientific">Mycobacterium leprae (strain TN)</name>
    <dbReference type="NCBI Taxonomy" id="272631"/>
    <lineage>
        <taxon>Bacteria</taxon>
        <taxon>Bacillati</taxon>
        <taxon>Actinomycetota</taxon>
        <taxon>Actinomycetes</taxon>
        <taxon>Mycobacteriales</taxon>
        <taxon>Mycobacteriaceae</taxon>
        <taxon>Mycobacterium</taxon>
    </lineage>
</organism>
<accession>P46815</accession>
<evidence type="ECO:0000250" key="1"/>
<evidence type="ECO:0000255" key="2"/>
<evidence type="ECO:0000256" key="3">
    <source>
        <dbReference type="SAM" id="MobiDB-lite"/>
    </source>
</evidence>
<evidence type="ECO:0000305" key="4"/>